<dbReference type="EC" id="1.2.1.38" evidence="1"/>
<dbReference type="EMBL" id="FM242711">
    <property type="protein sequence ID" value="CAS05363.1"/>
    <property type="molecule type" value="Genomic_DNA"/>
</dbReference>
<dbReference type="RefSeq" id="WP_003734346.1">
    <property type="nucleotide sequence ID" value="NC_012488.1"/>
</dbReference>
<dbReference type="SMR" id="C1KVN8"/>
<dbReference type="KEGG" id="lmc:Lm4b_01602"/>
<dbReference type="HOGENOM" id="CLU_006384_0_1_9"/>
<dbReference type="UniPathway" id="UPA00068">
    <property type="reaction ID" value="UER00108"/>
</dbReference>
<dbReference type="GO" id="GO:0005737">
    <property type="term" value="C:cytoplasm"/>
    <property type="evidence" value="ECO:0007669"/>
    <property type="project" value="UniProtKB-SubCell"/>
</dbReference>
<dbReference type="GO" id="GO:0003942">
    <property type="term" value="F:N-acetyl-gamma-glutamyl-phosphate reductase activity"/>
    <property type="evidence" value="ECO:0007669"/>
    <property type="project" value="UniProtKB-UniRule"/>
</dbReference>
<dbReference type="GO" id="GO:0051287">
    <property type="term" value="F:NAD binding"/>
    <property type="evidence" value="ECO:0007669"/>
    <property type="project" value="InterPro"/>
</dbReference>
<dbReference type="GO" id="GO:0070401">
    <property type="term" value="F:NADP+ binding"/>
    <property type="evidence" value="ECO:0007669"/>
    <property type="project" value="InterPro"/>
</dbReference>
<dbReference type="GO" id="GO:0006526">
    <property type="term" value="P:L-arginine biosynthetic process"/>
    <property type="evidence" value="ECO:0007669"/>
    <property type="project" value="UniProtKB-UniRule"/>
</dbReference>
<dbReference type="CDD" id="cd23934">
    <property type="entry name" value="AGPR_1_C"/>
    <property type="match status" value="1"/>
</dbReference>
<dbReference type="CDD" id="cd17895">
    <property type="entry name" value="AGPR_1_N"/>
    <property type="match status" value="1"/>
</dbReference>
<dbReference type="FunFam" id="3.30.360.10:FF:000014">
    <property type="entry name" value="N-acetyl-gamma-glutamyl-phosphate reductase"/>
    <property type="match status" value="1"/>
</dbReference>
<dbReference type="Gene3D" id="3.30.360.10">
    <property type="entry name" value="Dihydrodipicolinate Reductase, domain 2"/>
    <property type="match status" value="1"/>
</dbReference>
<dbReference type="Gene3D" id="3.40.50.720">
    <property type="entry name" value="NAD(P)-binding Rossmann-like Domain"/>
    <property type="match status" value="1"/>
</dbReference>
<dbReference type="HAMAP" id="MF_00150">
    <property type="entry name" value="ArgC_type1"/>
    <property type="match status" value="1"/>
</dbReference>
<dbReference type="InterPro" id="IPR023013">
    <property type="entry name" value="AGPR_AS"/>
</dbReference>
<dbReference type="InterPro" id="IPR000706">
    <property type="entry name" value="AGPR_type-1"/>
</dbReference>
<dbReference type="InterPro" id="IPR036291">
    <property type="entry name" value="NAD(P)-bd_dom_sf"/>
</dbReference>
<dbReference type="InterPro" id="IPR050085">
    <property type="entry name" value="NAGSA_dehydrogenase"/>
</dbReference>
<dbReference type="InterPro" id="IPR000534">
    <property type="entry name" value="Semialdehyde_DH_NAD-bd"/>
</dbReference>
<dbReference type="NCBIfam" id="TIGR01850">
    <property type="entry name" value="argC"/>
    <property type="match status" value="1"/>
</dbReference>
<dbReference type="PANTHER" id="PTHR32338:SF10">
    <property type="entry name" value="N-ACETYL-GAMMA-GLUTAMYL-PHOSPHATE REDUCTASE, CHLOROPLASTIC-RELATED"/>
    <property type="match status" value="1"/>
</dbReference>
<dbReference type="PANTHER" id="PTHR32338">
    <property type="entry name" value="N-ACETYL-GAMMA-GLUTAMYL-PHOSPHATE REDUCTASE, CHLOROPLASTIC-RELATED-RELATED"/>
    <property type="match status" value="1"/>
</dbReference>
<dbReference type="Pfam" id="PF01118">
    <property type="entry name" value="Semialdhyde_dh"/>
    <property type="match status" value="1"/>
</dbReference>
<dbReference type="Pfam" id="PF22698">
    <property type="entry name" value="Semialdhyde_dhC_1"/>
    <property type="match status" value="1"/>
</dbReference>
<dbReference type="SMART" id="SM00859">
    <property type="entry name" value="Semialdhyde_dh"/>
    <property type="match status" value="1"/>
</dbReference>
<dbReference type="SUPFAM" id="SSF55347">
    <property type="entry name" value="Glyceraldehyde-3-phosphate dehydrogenase-like, C-terminal domain"/>
    <property type="match status" value="1"/>
</dbReference>
<dbReference type="SUPFAM" id="SSF51735">
    <property type="entry name" value="NAD(P)-binding Rossmann-fold domains"/>
    <property type="match status" value="1"/>
</dbReference>
<dbReference type="PROSITE" id="PS01224">
    <property type="entry name" value="ARGC"/>
    <property type="match status" value="1"/>
</dbReference>
<proteinExistence type="inferred from homology"/>
<sequence length="343" mass="37744">MKVSIIGATGYGGLELIRLLHQHASVDIATLHSFSAQSETLATFYPHLKDLEASPLEKINSAEIIEKSDTVFIATPSGIAKDIALPYVDAGLNVIDLSGDFRLKDRQLYEKWYGKSAAPIEYIAKAEYGLAEFRDKKEARFIANPGCYATATLLGIAPLVKSQLIDPTSIIVDAKSGISGAGKVPSASTHFTETNENMTLYKMNSHQHIPEIMQQLTKWDETIPAIQFSTSLIPITRGIFTTIYVKPKNPITQKELHTLYKSTYENAPFVRIQPENVYPTVKQVTASNYCDIGLAYNEKTNVITIVSVLDNLVKGAAGQAIQNLNIMANFAESDGLRFIPVYP</sequence>
<keyword id="KW-0028">Amino-acid biosynthesis</keyword>
<keyword id="KW-0055">Arginine biosynthesis</keyword>
<keyword id="KW-0963">Cytoplasm</keyword>
<keyword id="KW-0521">NADP</keyword>
<keyword id="KW-0560">Oxidoreductase</keyword>
<comment type="function">
    <text evidence="1">Catalyzes the NADPH-dependent reduction of N-acetyl-5-glutamyl phosphate to yield N-acetyl-L-glutamate 5-semialdehyde.</text>
</comment>
<comment type="catalytic activity">
    <reaction evidence="1">
        <text>N-acetyl-L-glutamate 5-semialdehyde + phosphate + NADP(+) = N-acetyl-L-glutamyl 5-phosphate + NADPH + H(+)</text>
        <dbReference type="Rhea" id="RHEA:21588"/>
        <dbReference type="ChEBI" id="CHEBI:15378"/>
        <dbReference type="ChEBI" id="CHEBI:29123"/>
        <dbReference type="ChEBI" id="CHEBI:43474"/>
        <dbReference type="ChEBI" id="CHEBI:57783"/>
        <dbReference type="ChEBI" id="CHEBI:57936"/>
        <dbReference type="ChEBI" id="CHEBI:58349"/>
        <dbReference type="EC" id="1.2.1.38"/>
    </reaction>
</comment>
<comment type="pathway">
    <text evidence="1">Amino-acid biosynthesis; L-arginine biosynthesis; N(2)-acetyl-L-ornithine from L-glutamate: step 3/4.</text>
</comment>
<comment type="subcellular location">
    <subcellularLocation>
        <location evidence="1">Cytoplasm</location>
    </subcellularLocation>
</comment>
<comment type="similarity">
    <text evidence="1">Belongs to the NAGSA dehydrogenase family. Type 1 subfamily.</text>
</comment>
<evidence type="ECO:0000255" key="1">
    <source>
        <dbReference type="HAMAP-Rule" id="MF_00150"/>
    </source>
</evidence>
<organism>
    <name type="scientific">Listeria monocytogenes serotype 4b (strain CLIP80459)</name>
    <dbReference type="NCBI Taxonomy" id="568819"/>
    <lineage>
        <taxon>Bacteria</taxon>
        <taxon>Bacillati</taxon>
        <taxon>Bacillota</taxon>
        <taxon>Bacilli</taxon>
        <taxon>Bacillales</taxon>
        <taxon>Listeriaceae</taxon>
        <taxon>Listeria</taxon>
    </lineage>
</organism>
<name>ARGC_LISMC</name>
<accession>C1KVN8</accession>
<feature type="chain" id="PRO_1000203407" description="N-acetyl-gamma-glutamyl-phosphate reductase">
    <location>
        <begin position="1"/>
        <end position="343"/>
    </location>
</feature>
<feature type="active site" evidence="1">
    <location>
        <position position="147"/>
    </location>
</feature>
<reference key="1">
    <citation type="journal article" date="2012" name="BMC Genomics">
        <title>Comparative genomics and transcriptomics of lineages I, II, and III strains of Listeria monocytogenes.</title>
        <authorList>
            <person name="Hain T."/>
            <person name="Ghai R."/>
            <person name="Billion A."/>
            <person name="Kuenne C.T."/>
            <person name="Steinweg C."/>
            <person name="Izar B."/>
            <person name="Mohamed W."/>
            <person name="Mraheil M."/>
            <person name="Domann E."/>
            <person name="Schaffrath S."/>
            <person name="Karst U."/>
            <person name="Goesmann A."/>
            <person name="Oehm S."/>
            <person name="Puhler A."/>
            <person name="Merkl R."/>
            <person name="Vorwerk S."/>
            <person name="Glaser P."/>
            <person name="Garrido P."/>
            <person name="Rusniok C."/>
            <person name="Buchrieser C."/>
            <person name="Goebel W."/>
            <person name="Chakraborty T."/>
        </authorList>
    </citation>
    <scope>NUCLEOTIDE SEQUENCE [LARGE SCALE GENOMIC DNA]</scope>
    <source>
        <strain>CLIP80459</strain>
    </source>
</reference>
<protein>
    <recommendedName>
        <fullName evidence="1">N-acetyl-gamma-glutamyl-phosphate reductase</fullName>
        <shortName evidence="1">AGPR</shortName>
        <ecNumber evidence="1">1.2.1.38</ecNumber>
    </recommendedName>
    <alternativeName>
        <fullName evidence="1">N-acetyl-glutamate semialdehyde dehydrogenase</fullName>
        <shortName evidence="1">NAGSA dehydrogenase</shortName>
    </alternativeName>
</protein>
<gene>
    <name evidence="1" type="primary">argC</name>
    <name type="ordered locus">Lm4b_01602</name>
</gene>